<keyword id="KW-0975">Bacterial flagellum</keyword>
<keyword id="KW-0903">Direct protein sequencing</keyword>
<keyword id="KW-0574">Periplasm</keyword>
<keyword id="KW-1185">Reference proteome</keyword>
<gene>
    <name type="primary">fla</name>
    <name type="ordered locus">BB_0147</name>
</gene>
<proteinExistence type="evidence at protein level"/>
<protein>
    <recommendedName>
        <fullName>Flagellar filament 41 kDa core protein</fullName>
        <shortName>Flagellin</shortName>
    </recommendedName>
    <alternativeName>
        <fullName>41 kDa antigen</fullName>
    </alternativeName>
    <alternativeName>
        <fullName>P41</fullName>
    </alternativeName>
</protein>
<dbReference type="EMBL" id="X15660">
    <property type="protein sequence ID" value="CAA33695.1"/>
    <property type="molecule type" value="Genomic_DNA"/>
</dbReference>
<dbReference type="EMBL" id="X15661">
    <property type="protein sequence ID" value="CAA33696.1"/>
    <property type="molecule type" value="Genomic_DNA"/>
</dbReference>
<dbReference type="EMBL" id="X16833">
    <property type="protein sequence ID" value="CAA34735.1"/>
    <property type="molecule type" value="Genomic_DNA"/>
</dbReference>
<dbReference type="EMBL" id="X56334">
    <property type="protein sequence ID" value="CAA39770.1"/>
    <property type="molecule type" value="Genomic_DNA"/>
</dbReference>
<dbReference type="EMBL" id="M34710">
    <property type="protein sequence ID" value="AAA65584.1"/>
    <property type="molecule type" value="Genomic_DNA"/>
</dbReference>
<dbReference type="EMBL" id="L29244">
    <property type="protein sequence ID" value="AAA22942.1"/>
    <property type="molecule type" value="Genomic_DNA"/>
</dbReference>
<dbReference type="EMBL" id="L29200">
    <property type="protein sequence ID" value="AAB38539.1"/>
    <property type="molecule type" value="Genomic_DNA"/>
</dbReference>
<dbReference type="EMBL" id="L29234">
    <property type="protein sequence ID" value="AAA22944.1"/>
    <property type="molecule type" value="Genomic_DNA"/>
</dbReference>
<dbReference type="EMBL" id="L29243">
    <property type="protein sequence ID" value="AAA22941.1"/>
    <property type="molecule type" value="Genomic_DNA"/>
</dbReference>
<dbReference type="EMBL" id="X69611">
    <property type="protein sequence ID" value="CAA49319.1"/>
    <property type="molecule type" value="Genomic_DNA"/>
</dbReference>
<dbReference type="EMBL" id="AE000783">
    <property type="protein sequence ID" value="AAC66541.1"/>
    <property type="molecule type" value="Genomic_DNA"/>
</dbReference>
<dbReference type="EMBL" id="Y15090">
    <property type="protein sequence ID" value="CAA75365.1"/>
    <property type="molecule type" value="Genomic_DNA"/>
</dbReference>
<dbReference type="EMBL" id="Y15092">
    <property type="protein sequence ID" value="CAA75367.1"/>
    <property type="molecule type" value="Genomic_DNA"/>
</dbReference>
<dbReference type="EMBL" id="Y15093">
    <property type="protein sequence ID" value="CAA75368.1"/>
    <property type="molecule type" value="Genomic_DNA"/>
</dbReference>
<dbReference type="PIR" id="A38450">
    <property type="entry name" value="A38450"/>
</dbReference>
<dbReference type="PIR" id="A41470">
    <property type="entry name" value="FLLYB3"/>
</dbReference>
<dbReference type="PIR" id="I40092">
    <property type="entry name" value="I40092"/>
</dbReference>
<dbReference type="RefSeq" id="NP_212281.1">
    <property type="nucleotide sequence ID" value="NC_001318.1"/>
</dbReference>
<dbReference type="SMR" id="P11089"/>
<dbReference type="STRING" id="224326.BB_0147"/>
<dbReference type="PaxDb" id="224326-BB_0147"/>
<dbReference type="EnsemblBacteria" id="AAC66541">
    <property type="protein sequence ID" value="AAC66541"/>
    <property type="gene ID" value="BB_0147"/>
</dbReference>
<dbReference type="KEGG" id="bbu:BB_0147"/>
<dbReference type="PATRIC" id="fig|224326.49.peg.546"/>
<dbReference type="HOGENOM" id="CLU_011142_2_0_12"/>
<dbReference type="OrthoDB" id="9796789at2"/>
<dbReference type="Proteomes" id="UP000001807">
    <property type="component" value="Chromosome"/>
</dbReference>
<dbReference type="GO" id="GO:0016020">
    <property type="term" value="C:membrane"/>
    <property type="evidence" value="ECO:0000314"/>
    <property type="project" value="CAFA"/>
</dbReference>
<dbReference type="GO" id="GO:0055040">
    <property type="term" value="C:periplasmic flagellum"/>
    <property type="evidence" value="ECO:0007669"/>
    <property type="project" value="UniProtKB-SubCell"/>
</dbReference>
<dbReference type="GO" id="GO:0005198">
    <property type="term" value="F:structural molecule activity"/>
    <property type="evidence" value="ECO:0007669"/>
    <property type="project" value="InterPro"/>
</dbReference>
<dbReference type="Gene3D" id="1.20.1330.10">
    <property type="entry name" value="f41 fragment of flagellin, N-terminal domain"/>
    <property type="match status" value="1"/>
</dbReference>
<dbReference type="InterPro" id="IPR001444">
    <property type="entry name" value="Flag_bb_rod_N"/>
</dbReference>
<dbReference type="InterPro" id="IPR019776">
    <property type="entry name" value="Flagellar_basal_body_rod_CS"/>
</dbReference>
<dbReference type="InterPro" id="IPR001492">
    <property type="entry name" value="Flagellin"/>
</dbReference>
<dbReference type="InterPro" id="IPR046358">
    <property type="entry name" value="Flagellin_C"/>
</dbReference>
<dbReference type="InterPro" id="IPR001029">
    <property type="entry name" value="Flagellin_N"/>
</dbReference>
<dbReference type="NCBIfam" id="NF009445">
    <property type="entry name" value="PRK12803.1"/>
    <property type="match status" value="1"/>
</dbReference>
<dbReference type="PANTHER" id="PTHR42792">
    <property type="entry name" value="FLAGELLIN"/>
    <property type="match status" value="1"/>
</dbReference>
<dbReference type="PANTHER" id="PTHR42792:SF2">
    <property type="entry name" value="FLAGELLIN"/>
    <property type="match status" value="1"/>
</dbReference>
<dbReference type="Pfam" id="PF00700">
    <property type="entry name" value="Flagellin_C"/>
    <property type="match status" value="1"/>
</dbReference>
<dbReference type="Pfam" id="PF00669">
    <property type="entry name" value="Flagellin_N"/>
    <property type="match status" value="1"/>
</dbReference>
<dbReference type="Pfam" id="PF00460">
    <property type="entry name" value="Flg_bb_rod"/>
    <property type="match status" value="1"/>
</dbReference>
<dbReference type="PRINTS" id="PR00207">
    <property type="entry name" value="FLAGELLIN"/>
</dbReference>
<dbReference type="SUPFAM" id="SSF64518">
    <property type="entry name" value="Phase 1 flagellin"/>
    <property type="match status" value="1"/>
</dbReference>
<dbReference type="PROSITE" id="PS00588">
    <property type="entry name" value="FLAGELLA_BB_ROD"/>
    <property type="match status" value="1"/>
</dbReference>
<feature type="chain" id="PRO_0000182590" description="Flagellar filament 41 kDa core protein">
    <location>
        <begin position="1"/>
        <end position="336"/>
    </location>
</feature>
<feature type="region of interest" description="Disordered" evidence="1">
    <location>
        <begin position="208"/>
        <end position="236"/>
    </location>
</feature>
<feature type="compositionally biased region" description="Low complexity" evidence="1">
    <location>
        <begin position="210"/>
        <end position="233"/>
    </location>
</feature>
<feature type="sequence variant" description="In strain: 212.">
    <original>A</original>
    <variation>S</variation>
    <location>
        <position position="156"/>
    </location>
</feature>
<feature type="sequence variant" description="In strain: B31 and KA.">
    <original>D</original>
    <variation>N</variation>
    <location>
        <position position="279"/>
    </location>
</feature>
<feature type="sequence conflict" description="In Ref. 3; CAA33696/CAA34735." evidence="2" ref="3">
    <original>N</original>
    <variation>T</variation>
    <location>
        <position position="180"/>
    </location>
</feature>
<comment type="function">
    <text>Component of the core of the flagella.</text>
</comment>
<comment type="subunit">
    <text>The flagellum consists of an outer layer composed of repeating units of FlaA around a core that contains several antigenically related polypeptides.</text>
</comment>
<comment type="subcellular location">
    <subcellularLocation>
        <location>Periplasmic flagellum</location>
    </subcellularLocation>
    <subcellularLocation>
        <location>Periplasm</location>
    </subcellularLocation>
</comment>
<comment type="similarity">
    <text evidence="2">Belongs to the bacterial flagellin family.</text>
</comment>
<reference key="1">
    <citation type="journal article" date="1989" name="Nucleic Acids Res.">
        <title>Nucleotide sequence of a gene encoding the Borrelia burgdorferi flagellin.</title>
        <authorList>
            <person name="Gassmann G.S."/>
            <person name="Kramer M.D."/>
            <person name="Goebel U.B."/>
            <person name="Wallich R."/>
        </authorList>
    </citation>
    <scope>NUCLEOTIDE SEQUENCE [GENOMIC DNA]</scope>
    <scope>PROTEIN SEQUENCE OF N-TERMINUS</scope>
    <source>
        <strain>ATCC 35210 / DSM 4680 / CIP 102532 / B31</strain>
        <strain>GeHo</strain>
    </source>
</reference>
<reference key="2">
    <citation type="journal article" date="1991" name="J. Bacteriol.">
        <title>Analysis of the Borrelia burgdorferi GeHo fla gene and antigenic characterization of its gene product.</title>
        <authorList>
            <person name="Gassmann G.S."/>
            <person name="Jacobs E."/>
            <person name="Deutzmann R."/>
            <person name="Goebel U.B."/>
        </authorList>
    </citation>
    <scope>NUCLEOTIDE SEQUENCE [GENOMIC DNA]</scope>
    <source>
        <strain>GeHo</strain>
    </source>
</reference>
<reference key="3">
    <citation type="journal article" date="1990" name="Infect. Immun.">
        <title>The Borrelia burgdorferi flagellum-associated 41-kilodalton antigen (flagellin): molecular cloning, expression, and amplification of the gene.</title>
        <authorList>
            <person name="Wallich R."/>
            <person name="Moter S.E."/>
            <person name="Simon M.M."/>
            <person name="Ebnet K."/>
            <person name="Heiberger A."/>
            <person name="Kramer M.D."/>
        </authorList>
    </citation>
    <scope>NUCLEOTIDE SEQUENCE [GENOMIC DNA]</scope>
    <source>
        <strain>ATCC 35210 / DSM 4680 / CIP 102532 / B31</strain>
    </source>
</reference>
<reference key="4">
    <citation type="journal article" date="1991" name="Infect. Immun.">
        <title>Immunoreactive epitopes on an expressed recombinant flagellar protein of Borrelia burgdorferi.</title>
        <authorList>
            <person name="Collins C."/>
            <person name="Peltz G."/>
        </authorList>
    </citation>
    <scope>NUCLEOTIDE SEQUENCE [GENOMIC DNA]</scope>
    <source>
        <strain>CA12</strain>
    </source>
</reference>
<reference key="5">
    <citation type="journal article" date="1993" name="Proc. Natl. Acad. Sci. U.S.A.">
        <title>Borrelia burgdorferi is clonal: implications for taxonomy and vaccine development.</title>
        <authorList>
            <person name="Dykhuizen D.E."/>
            <person name="Polin D.S."/>
            <person name="Dunn J.J."/>
            <person name="Wilske B."/>
            <person name="Preac-Mursic V."/>
            <person name="Dattwyler R.J."/>
            <person name="Luft B.J."/>
        </authorList>
    </citation>
    <scope>NUCLEOTIDE SEQUENCE [GENOMIC DNA]</scope>
    <source>
        <strain>KA</strain>
    </source>
</reference>
<reference key="6">
    <citation type="journal article" date="1997" name="Nature">
        <title>Genomic sequence of a Lyme disease spirochaete, Borrelia burgdorferi.</title>
        <authorList>
            <person name="Fraser C.M."/>
            <person name="Casjens S."/>
            <person name="Huang W.M."/>
            <person name="Sutton G.G."/>
            <person name="Clayton R.A."/>
            <person name="Lathigra R."/>
            <person name="White O."/>
            <person name="Ketchum K.A."/>
            <person name="Dodson R.J."/>
            <person name="Hickey E.K."/>
            <person name="Gwinn M.L."/>
            <person name="Dougherty B.A."/>
            <person name="Tomb J.-F."/>
            <person name="Fleischmann R.D."/>
            <person name="Richardson D.L."/>
            <person name="Peterson J.D."/>
            <person name="Kerlavage A.R."/>
            <person name="Quackenbush J."/>
            <person name="Salzberg S.L."/>
            <person name="Hanson M."/>
            <person name="van Vugt R."/>
            <person name="Palmer N."/>
            <person name="Adams M.D."/>
            <person name="Gocayne J.D."/>
            <person name="Weidman J.F."/>
            <person name="Utterback T.R."/>
            <person name="Watthey L."/>
            <person name="McDonald L.A."/>
            <person name="Artiach P."/>
            <person name="Bowman C."/>
            <person name="Garland S.A."/>
            <person name="Fujii C."/>
            <person name="Cotton M.D."/>
            <person name="Horst K."/>
            <person name="Roberts K.M."/>
            <person name="Hatch B."/>
            <person name="Smith H.O."/>
            <person name="Venter J.C."/>
        </authorList>
    </citation>
    <scope>NUCLEOTIDE SEQUENCE [LARGE SCALE GENOMIC DNA]</scope>
    <source>
        <strain>ATCC 35210 / DSM 4680 / CIP 102532 / B31</strain>
    </source>
</reference>
<reference key="7">
    <citation type="journal article" date="1992" name="J. Clin. Microbiol.">
        <title>Polymerase chain reaction primers and probes derived from flagellin gene sequences for specific detection of the agents of Lyme disease and North American relapsing fever.</title>
        <authorList>
            <person name="Picken R.N."/>
        </authorList>
    </citation>
    <scope>NUCLEOTIDE SEQUENCE [GENOMIC DNA] OF 1-64</scope>
    <source>
        <strain>ATCC 35210 / DSM 4680 / CIP 102532 / B31</strain>
    </source>
</reference>
<reference key="8">
    <citation type="submission" date="1994-07" db="EMBL/GenBank/DDBJ databases">
        <authorList>
            <person name="Assous M.V."/>
            <person name="Postic D.D.P."/>
            <person name="Paul G.G.P."/>
            <person name="Nevot P.P.N."/>
            <person name="Baranton G.G.B."/>
        </authorList>
    </citation>
    <scope>NUCLEOTIDE SEQUENCE [GENOMIC DNA] OF 174-237</scope>
    <source>
        <strain>212</strain>
        <strain>ATCC 35210 / DSM 4680 / CIP 102532 / B31</strain>
        <strain>CA55</strain>
        <strain>DN127</strain>
    </source>
</reference>
<reference key="9">
    <citation type="submission" date="1997-10" db="EMBL/GenBank/DDBJ databases">
        <authorList>
            <person name="Curtin S.M."/>
            <person name="Maggs A.D.F."/>
            <person name="Carter P.E."/>
            <person name="Pennington T.H."/>
        </authorList>
    </citation>
    <scope>NUCLEOTIDE SEQUENCE [GENOMIC DNA] OF 157-324</scope>
    <source>
        <strain>212</strain>
        <strain>DK-5</strain>
        <strain>GeHo</strain>
    </source>
</reference>
<reference key="10">
    <citation type="journal article" date="1989" name="Infect. Immun.">
        <title>Biochemical and immunological characterization of the surface proteins of Borrelia burgdorferi.</title>
        <authorList>
            <person name="Luft B.J."/>
            <person name="Jiang W."/>
            <person name="Munoz P."/>
            <person name="Dattwyler R.J."/>
            <person name="Gorevic P.D."/>
        </authorList>
    </citation>
    <scope>PROTEIN SEQUENCE OF 1-18</scope>
    <source>
        <strain>ATCC 35210 / DSM 4680 / CIP 102532 / B31</strain>
    </source>
</reference>
<reference key="11">
    <citation type="journal article" date="1989" name="J. Clin. Invest.">
        <title>Identification and characterization of an endoflagellar antigen of Borrelia burgdorferi.</title>
        <authorList>
            <person name="Coleman J.L."/>
            <person name="Benach J.L."/>
        </authorList>
    </citation>
    <scope>PROTEIN SEQUENCE OF 1-10</scope>
    <source>
        <strain>ATCC 35210 / DSM 4680 / CIP 102532 / B31</strain>
    </source>
</reference>
<name>FLA1_BORBU</name>
<sequence length="336" mass="35766">MIINHNTSAINASRNNGINAANLSKTQEKLSSGYRINRASDDAAGMGVSGKINAQIRGLSQASRNTSKAINFIQTTEGNLNEVEKVLVRMKELAVQSGNGTYSDADRGSIQIEIEQLTDEINRIADQAQYNQMHMLSNKSASQNVRTAEELGMQPAKINTPASLSGSQASWTLRVHVGANQDEAIAVNIYAANVANLFSGEGAQTAQAAPVQEGVQQEGAQQPAPATAPSQGGVNSPVNVTTTVDANTSLAKIENAIRMISDQRANLGAFQNRLESIKDSTEYAIENLKASYAQIKDATMTDEVVAATTNSILTQSAMAMIAQANQVPQYVLSLLR</sequence>
<organism>
    <name type="scientific">Borreliella burgdorferi (strain ATCC 35210 / DSM 4680 / CIP 102532 / B31)</name>
    <name type="common">Borrelia burgdorferi</name>
    <dbReference type="NCBI Taxonomy" id="224326"/>
    <lineage>
        <taxon>Bacteria</taxon>
        <taxon>Pseudomonadati</taxon>
        <taxon>Spirochaetota</taxon>
        <taxon>Spirochaetia</taxon>
        <taxon>Spirochaetales</taxon>
        <taxon>Borreliaceae</taxon>
        <taxon>Borreliella</taxon>
    </lineage>
</organism>
<evidence type="ECO:0000256" key="1">
    <source>
        <dbReference type="SAM" id="MobiDB-lite"/>
    </source>
</evidence>
<evidence type="ECO:0000305" key="2"/>
<accession>P11089</accession>
<accession>O31322</accession>
<accession>P15295</accession>
<accession>Q44938</accession>